<accession>P46793</accession>
<accession>Q551M8</accession>
<accession>Q86HE3</accession>
<sequence>MVRISVLNDCLNSIVNAERQGKRQVLVRPSSKVIVKFLEVMMKKRYIGEFEIVDDHRSGKIVIDLIGRINKCGVISPRFDVTLDEIEKWASYLLPSRQFGHIVLTTSLGIMDHNEAKTRHTGGKLLGFFY</sequence>
<keyword id="KW-1185">Reference proteome</keyword>
<keyword id="KW-0687">Ribonucleoprotein</keyword>
<keyword id="KW-0689">Ribosomal protein</keyword>
<protein>
    <recommendedName>
        <fullName evidence="2">Small ribosomal subunit protein uS8</fullName>
    </recommendedName>
    <alternativeName>
        <fullName>40S ribosomal protein S15a</fullName>
    </alternativeName>
    <alternativeName>
        <fullName>Ribosomal protein S24</fullName>
    </alternativeName>
</protein>
<organism>
    <name type="scientific">Dictyostelium discoideum</name>
    <name type="common">Social amoeba</name>
    <dbReference type="NCBI Taxonomy" id="44689"/>
    <lineage>
        <taxon>Eukaryota</taxon>
        <taxon>Amoebozoa</taxon>
        <taxon>Evosea</taxon>
        <taxon>Eumycetozoa</taxon>
        <taxon>Dictyostelia</taxon>
        <taxon>Dictyosteliales</taxon>
        <taxon>Dictyosteliaceae</taxon>
        <taxon>Dictyostelium</taxon>
    </lineage>
</organism>
<evidence type="ECO:0000250" key="1"/>
<evidence type="ECO:0000305" key="2"/>
<dbReference type="EMBL" id="U27539">
    <property type="protein sequence ID" value="AAA70102.1"/>
    <property type="molecule type" value="mRNA"/>
</dbReference>
<dbReference type="EMBL" id="AAFI02000015">
    <property type="protein sequence ID" value="EAL69182.1"/>
    <property type="molecule type" value="Genomic_DNA"/>
</dbReference>
<dbReference type="RefSeq" id="XP_643091.1">
    <property type="nucleotide sequence ID" value="XM_637999.1"/>
</dbReference>
<dbReference type="SMR" id="P46793"/>
<dbReference type="FunCoup" id="P46793">
    <property type="interactions" value="575"/>
</dbReference>
<dbReference type="STRING" id="44689.P46793"/>
<dbReference type="PaxDb" id="44689-DDB0185069"/>
<dbReference type="EnsemblProtists" id="EAL69182">
    <property type="protein sequence ID" value="EAL69182"/>
    <property type="gene ID" value="DDB_G0276457"/>
</dbReference>
<dbReference type="GeneID" id="8620495"/>
<dbReference type="KEGG" id="ddi:DDB_G0276457"/>
<dbReference type="dictyBase" id="DDB_G0276457">
    <property type="gene designation" value="rps15a"/>
</dbReference>
<dbReference type="VEuPathDB" id="AmoebaDB:DDB_G0276457"/>
<dbReference type="eggNOG" id="KOG1754">
    <property type="taxonomic scope" value="Eukaryota"/>
</dbReference>
<dbReference type="HOGENOM" id="CLU_098428_1_1_1"/>
<dbReference type="InParanoid" id="P46793"/>
<dbReference type="OMA" id="LPAKNFG"/>
<dbReference type="PhylomeDB" id="P46793"/>
<dbReference type="Reactome" id="R-DDI-156827">
    <property type="pathway name" value="L13a-mediated translational silencing of Ceruloplasmin expression"/>
</dbReference>
<dbReference type="Reactome" id="R-DDI-1799339">
    <property type="pathway name" value="SRP-dependent cotranslational protein targeting to membrane"/>
</dbReference>
<dbReference type="Reactome" id="R-DDI-72689">
    <property type="pathway name" value="Formation of a pool of free 40S subunits"/>
</dbReference>
<dbReference type="Reactome" id="R-DDI-72695">
    <property type="pathway name" value="Formation of the ternary complex, and subsequently, the 43S complex"/>
</dbReference>
<dbReference type="Reactome" id="R-DDI-72702">
    <property type="pathway name" value="Ribosomal scanning and start codon recognition"/>
</dbReference>
<dbReference type="Reactome" id="R-DDI-72706">
    <property type="pathway name" value="GTP hydrolysis and joining of the 60S ribosomal subunit"/>
</dbReference>
<dbReference type="Reactome" id="R-DDI-975956">
    <property type="pathway name" value="Nonsense Mediated Decay (NMD) independent of the Exon Junction Complex (EJC)"/>
</dbReference>
<dbReference type="Reactome" id="R-DDI-975957">
    <property type="pathway name" value="Nonsense Mediated Decay (NMD) enhanced by the Exon Junction Complex (EJC)"/>
</dbReference>
<dbReference type="PRO" id="PR:P46793"/>
<dbReference type="Proteomes" id="UP000002195">
    <property type="component" value="Chromosome 2"/>
</dbReference>
<dbReference type="GO" id="GO:0022627">
    <property type="term" value="C:cytosolic small ribosomal subunit"/>
    <property type="evidence" value="ECO:0000250"/>
    <property type="project" value="dictyBase"/>
</dbReference>
<dbReference type="GO" id="GO:0031012">
    <property type="term" value="C:extracellular matrix"/>
    <property type="evidence" value="ECO:0007005"/>
    <property type="project" value="dictyBase"/>
</dbReference>
<dbReference type="GO" id="GO:0003735">
    <property type="term" value="F:structural constituent of ribosome"/>
    <property type="evidence" value="ECO:0000250"/>
    <property type="project" value="dictyBase"/>
</dbReference>
<dbReference type="GO" id="GO:0006412">
    <property type="term" value="P:translation"/>
    <property type="evidence" value="ECO:0007669"/>
    <property type="project" value="InterPro"/>
</dbReference>
<dbReference type="FunFam" id="3.30.1370.30:FF:000001">
    <property type="entry name" value="40S ribosomal protein S15a"/>
    <property type="match status" value="1"/>
</dbReference>
<dbReference type="FunFam" id="3.30.1490.10:FF:000002">
    <property type="entry name" value="40S ribosomal protein S15a"/>
    <property type="match status" value="1"/>
</dbReference>
<dbReference type="Gene3D" id="3.30.1370.30">
    <property type="match status" value="1"/>
</dbReference>
<dbReference type="Gene3D" id="3.30.1490.10">
    <property type="match status" value="1"/>
</dbReference>
<dbReference type="InterPro" id="IPR000630">
    <property type="entry name" value="Ribosomal_uS8"/>
</dbReference>
<dbReference type="InterPro" id="IPR047863">
    <property type="entry name" value="Ribosomal_uS8_CS"/>
</dbReference>
<dbReference type="InterPro" id="IPR035987">
    <property type="entry name" value="Ribosomal_uS8_sf"/>
</dbReference>
<dbReference type="NCBIfam" id="NF003115">
    <property type="entry name" value="PRK04034.1"/>
    <property type="match status" value="1"/>
</dbReference>
<dbReference type="PANTHER" id="PTHR11758">
    <property type="entry name" value="40S RIBOSOMAL PROTEIN S15A"/>
    <property type="match status" value="1"/>
</dbReference>
<dbReference type="Pfam" id="PF00410">
    <property type="entry name" value="Ribosomal_S8"/>
    <property type="match status" value="1"/>
</dbReference>
<dbReference type="SUPFAM" id="SSF56047">
    <property type="entry name" value="Ribosomal protein S8"/>
    <property type="match status" value="1"/>
</dbReference>
<dbReference type="PROSITE" id="PS00053">
    <property type="entry name" value="RIBOSOMAL_S8"/>
    <property type="match status" value="1"/>
</dbReference>
<reference key="1">
    <citation type="submission" date="1995-05" db="EMBL/GenBank/DDBJ databases">
        <title>Primary sequence and developmental regulation of Dictyostelium ribosomal protein S24.</title>
        <authorList>
            <person name="Jho E."/>
            <person name="Kopachik W."/>
        </authorList>
    </citation>
    <scope>NUCLEOTIDE SEQUENCE [MRNA]</scope>
    <source>
        <strain>AX3</strain>
    </source>
</reference>
<reference key="2">
    <citation type="journal article" date="2002" name="Nature">
        <title>Sequence and analysis of chromosome 2 of Dictyostelium discoideum.</title>
        <authorList>
            <person name="Gloeckner G."/>
            <person name="Eichinger L."/>
            <person name="Szafranski K."/>
            <person name="Pachebat J.A."/>
            <person name="Bankier A.T."/>
            <person name="Dear P.H."/>
            <person name="Lehmann R."/>
            <person name="Baumgart C."/>
            <person name="Parra G."/>
            <person name="Abril J.F."/>
            <person name="Guigo R."/>
            <person name="Kumpf K."/>
            <person name="Tunggal B."/>
            <person name="Cox E.C."/>
            <person name="Quail M.A."/>
            <person name="Platzer M."/>
            <person name="Rosenthal A."/>
            <person name="Noegel A.A."/>
        </authorList>
    </citation>
    <scope>NUCLEOTIDE SEQUENCE [LARGE SCALE GENOMIC DNA]</scope>
    <source>
        <strain>AX4</strain>
    </source>
</reference>
<reference key="3">
    <citation type="journal article" date="2005" name="Nature">
        <title>The genome of the social amoeba Dictyostelium discoideum.</title>
        <authorList>
            <person name="Eichinger L."/>
            <person name="Pachebat J.A."/>
            <person name="Gloeckner G."/>
            <person name="Rajandream M.A."/>
            <person name="Sucgang R."/>
            <person name="Berriman M."/>
            <person name="Song J."/>
            <person name="Olsen R."/>
            <person name="Szafranski K."/>
            <person name="Xu Q."/>
            <person name="Tunggal B."/>
            <person name="Kummerfeld S."/>
            <person name="Madera M."/>
            <person name="Konfortov B.A."/>
            <person name="Rivero F."/>
            <person name="Bankier A.T."/>
            <person name="Lehmann R."/>
            <person name="Hamlin N."/>
            <person name="Davies R."/>
            <person name="Gaudet P."/>
            <person name="Fey P."/>
            <person name="Pilcher K."/>
            <person name="Chen G."/>
            <person name="Saunders D."/>
            <person name="Sodergren E.J."/>
            <person name="Davis P."/>
            <person name="Kerhornou A."/>
            <person name="Nie X."/>
            <person name="Hall N."/>
            <person name="Anjard C."/>
            <person name="Hemphill L."/>
            <person name="Bason N."/>
            <person name="Farbrother P."/>
            <person name="Desany B."/>
            <person name="Just E."/>
            <person name="Morio T."/>
            <person name="Rost R."/>
            <person name="Churcher C.M."/>
            <person name="Cooper J."/>
            <person name="Haydock S."/>
            <person name="van Driessche N."/>
            <person name="Cronin A."/>
            <person name="Goodhead I."/>
            <person name="Muzny D.M."/>
            <person name="Mourier T."/>
            <person name="Pain A."/>
            <person name="Lu M."/>
            <person name="Harper D."/>
            <person name="Lindsay R."/>
            <person name="Hauser H."/>
            <person name="James K.D."/>
            <person name="Quiles M."/>
            <person name="Madan Babu M."/>
            <person name="Saito T."/>
            <person name="Buchrieser C."/>
            <person name="Wardroper A."/>
            <person name="Felder M."/>
            <person name="Thangavelu M."/>
            <person name="Johnson D."/>
            <person name="Knights A."/>
            <person name="Loulseged H."/>
            <person name="Mungall K.L."/>
            <person name="Oliver K."/>
            <person name="Price C."/>
            <person name="Quail M.A."/>
            <person name="Urushihara H."/>
            <person name="Hernandez J."/>
            <person name="Rabbinowitsch E."/>
            <person name="Steffen D."/>
            <person name="Sanders M."/>
            <person name="Ma J."/>
            <person name="Kohara Y."/>
            <person name="Sharp S."/>
            <person name="Simmonds M.N."/>
            <person name="Spiegler S."/>
            <person name="Tivey A."/>
            <person name="Sugano S."/>
            <person name="White B."/>
            <person name="Walker D."/>
            <person name="Woodward J.R."/>
            <person name="Winckler T."/>
            <person name="Tanaka Y."/>
            <person name="Shaulsky G."/>
            <person name="Schleicher M."/>
            <person name="Weinstock G.M."/>
            <person name="Rosenthal A."/>
            <person name="Cox E.C."/>
            <person name="Chisholm R.L."/>
            <person name="Gibbs R.A."/>
            <person name="Loomis W.F."/>
            <person name="Platzer M."/>
            <person name="Kay R.R."/>
            <person name="Williams J.G."/>
            <person name="Dear P.H."/>
            <person name="Noegel A.A."/>
            <person name="Barrell B.G."/>
            <person name="Kuspa A."/>
        </authorList>
    </citation>
    <scope>NUCLEOTIDE SEQUENCE [LARGE SCALE GENOMIC DNA]</scope>
    <source>
        <strain>AX4</strain>
    </source>
</reference>
<gene>
    <name type="primary">rps15a</name>
    <name type="synonym">rps24</name>
    <name type="ORF">DDB_G0276457</name>
</gene>
<feature type="initiator methionine" description="Removed" evidence="1">
    <location>
        <position position="1"/>
    </location>
</feature>
<feature type="chain" id="PRO_0000126608" description="Small ribosomal subunit protein uS8">
    <location>
        <begin position="2"/>
        <end position="130"/>
    </location>
</feature>
<feature type="sequence conflict" description="In Ref. 1; AAA70102." evidence="2" ref="1">
    <original>N</original>
    <variation>Y</variation>
    <location>
        <position position="12"/>
    </location>
</feature>
<name>RS15A_DICDI</name>
<proteinExistence type="evidence at transcript level"/>
<comment type="similarity">
    <text evidence="2">Belongs to the universal ribosomal protein uS8 family.</text>
</comment>